<proteinExistence type="evidence at protein level"/>
<reference key="1">
    <citation type="journal article" date="1997" name="Nature">
        <title>The complete genome sequence of the gastric pathogen Helicobacter pylori.</title>
        <authorList>
            <person name="Tomb J.-F."/>
            <person name="White O."/>
            <person name="Kerlavage A.R."/>
            <person name="Clayton R.A."/>
            <person name="Sutton G.G."/>
            <person name="Fleischmann R.D."/>
            <person name="Ketchum K.A."/>
            <person name="Klenk H.-P."/>
            <person name="Gill S.R."/>
            <person name="Dougherty B.A."/>
            <person name="Nelson K.E."/>
            <person name="Quackenbush J."/>
            <person name="Zhou L."/>
            <person name="Kirkness E.F."/>
            <person name="Peterson S.N."/>
            <person name="Loftus B.J."/>
            <person name="Richardson D.L."/>
            <person name="Dodson R.J."/>
            <person name="Khalak H.G."/>
            <person name="Glodek A."/>
            <person name="McKenney K."/>
            <person name="FitzGerald L.M."/>
            <person name="Lee N."/>
            <person name="Adams M.D."/>
            <person name="Hickey E.K."/>
            <person name="Berg D.E."/>
            <person name="Gocayne J.D."/>
            <person name="Utterback T.R."/>
            <person name="Peterson J.D."/>
            <person name="Kelley J.M."/>
            <person name="Cotton M.D."/>
            <person name="Weidman J.F."/>
            <person name="Fujii C."/>
            <person name="Bowman C."/>
            <person name="Watthey L."/>
            <person name="Wallin E."/>
            <person name="Hayes W.S."/>
            <person name="Borodovsky M."/>
            <person name="Karp P.D."/>
            <person name="Smith H.O."/>
            <person name="Fraser C.M."/>
            <person name="Venter J.C."/>
        </authorList>
    </citation>
    <scope>NUCLEOTIDE SEQUENCE [LARGE SCALE GENOMIC DNA]</scope>
    <source>
        <strain>ATCC 700392 / 26695</strain>
    </source>
</reference>
<reference key="2">
    <citation type="journal article" date="1997" name="J. Biol. Chem.">
        <title>Cloning and characterization of Helicobacter pylori succinyl CoA:acetoacetate CoA-transferase, a novel prokaryotic member of the CoA-transferase family.</title>
        <authorList>
            <person name="Corthesy-Theulaz I.E."/>
            <person name="Bergonzelli G.E."/>
            <person name="Henry H."/>
            <person name="Bachmann D."/>
            <person name="Schorderet D.F."/>
            <person name="Blum A.L."/>
            <person name="Ornston L.N."/>
        </authorList>
    </citation>
    <scope>NUCLEOTIDE SEQUENCE [GENOMIC DNA]</scope>
    <scope>CHARACTERIZATION</scope>
    <source>
        <strain>69A</strain>
    </source>
</reference>
<name>SCOB_HELPY</name>
<accession>P56007</accession>
<dbReference type="EC" id="2.8.3.5"/>
<dbReference type="EMBL" id="AE000511">
    <property type="protein sequence ID" value="AAD07744.1"/>
    <property type="molecule type" value="Genomic_DNA"/>
</dbReference>
<dbReference type="EMBL" id="AJ000086">
    <property type="protein sequence ID" value="CAA03917.1"/>
    <property type="molecule type" value="Genomic_DNA"/>
</dbReference>
<dbReference type="PIR" id="D64606">
    <property type="entry name" value="D64606"/>
</dbReference>
<dbReference type="RefSeq" id="NP_207486.1">
    <property type="nucleotide sequence ID" value="NC_000915.1"/>
</dbReference>
<dbReference type="RefSeq" id="WP_001206261.1">
    <property type="nucleotide sequence ID" value="NC_018939.1"/>
</dbReference>
<dbReference type="PDB" id="3RRL">
    <property type="method" value="X-ray"/>
    <property type="resolution" value="2.29 A"/>
    <property type="chains" value="B/D=1-207"/>
</dbReference>
<dbReference type="PDBsum" id="3RRL"/>
<dbReference type="SMR" id="P56007"/>
<dbReference type="DIP" id="DIP-3482N"/>
<dbReference type="FunCoup" id="P56007">
    <property type="interactions" value="55"/>
</dbReference>
<dbReference type="IntAct" id="P56007">
    <property type="interactions" value="4"/>
</dbReference>
<dbReference type="MINT" id="P56007"/>
<dbReference type="STRING" id="85962.HP_0692"/>
<dbReference type="PaxDb" id="85962-C694_03565"/>
<dbReference type="DNASU" id="899313"/>
<dbReference type="EnsemblBacteria" id="AAD07744">
    <property type="protein sequence ID" value="AAD07744"/>
    <property type="gene ID" value="HP_0692"/>
</dbReference>
<dbReference type="KEGG" id="heo:C694_03565"/>
<dbReference type="KEGG" id="hpy:HP_0692"/>
<dbReference type="PATRIC" id="fig|85962.47.peg.740"/>
<dbReference type="eggNOG" id="COG2057">
    <property type="taxonomic scope" value="Bacteria"/>
</dbReference>
<dbReference type="InParanoid" id="P56007"/>
<dbReference type="OrthoDB" id="9778604at2"/>
<dbReference type="PhylomeDB" id="P56007"/>
<dbReference type="BioCyc" id="MetaCyc:HP_RS03385-MONOMER"/>
<dbReference type="EvolutionaryTrace" id="P56007"/>
<dbReference type="Proteomes" id="UP000000429">
    <property type="component" value="Chromosome"/>
</dbReference>
<dbReference type="GO" id="GO:0008410">
    <property type="term" value="F:CoA-transferase activity"/>
    <property type="evidence" value="ECO:0000318"/>
    <property type="project" value="GO_Central"/>
</dbReference>
<dbReference type="GO" id="GO:0008260">
    <property type="term" value="F:succinyl-CoA:3-oxo-acid CoA-transferase activity"/>
    <property type="evidence" value="ECO:0007669"/>
    <property type="project" value="UniProtKB-EC"/>
</dbReference>
<dbReference type="FunFam" id="3.40.1080.10:FF:000001">
    <property type="entry name" value="Succinyl-coa:3-ketoacid-coenzyme a transferase subunit b"/>
    <property type="match status" value="1"/>
</dbReference>
<dbReference type="Gene3D" id="3.40.1080.10">
    <property type="entry name" value="Glutaconate Coenzyme A-transferase"/>
    <property type="match status" value="1"/>
</dbReference>
<dbReference type="InterPro" id="IPR012791">
    <property type="entry name" value="3-oxoacid_CoA-transf_B"/>
</dbReference>
<dbReference type="InterPro" id="IPR004165">
    <property type="entry name" value="CoA_trans_fam_I"/>
</dbReference>
<dbReference type="InterPro" id="IPR004164">
    <property type="entry name" value="CoA_transf_AS"/>
</dbReference>
<dbReference type="InterPro" id="IPR037171">
    <property type="entry name" value="NagB/RpiA_transferase-like"/>
</dbReference>
<dbReference type="NCBIfam" id="TIGR02428">
    <property type="entry name" value="pcaJ_scoB_fam"/>
    <property type="match status" value="1"/>
</dbReference>
<dbReference type="PANTHER" id="PTHR13707">
    <property type="entry name" value="KETOACID-COENZYME A TRANSFERASE"/>
    <property type="match status" value="1"/>
</dbReference>
<dbReference type="PANTHER" id="PTHR13707:SF57">
    <property type="entry name" value="SUCCINYL-COA:3-KETOACID COENZYME A TRANSFERASE SUBUNIT B-RELATED"/>
    <property type="match status" value="1"/>
</dbReference>
<dbReference type="Pfam" id="PF01144">
    <property type="entry name" value="CoA_trans"/>
    <property type="match status" value="1"/>
</dbReference>
<dbReference type="SMART" id="SM00882">
    <property type="entry name" value="CoA_trans"/>
    <property type="match status" value="1"/>
</dbReference>
<dbReference type="SUPFAM" id="SSF100950">
    <property type="entry name" value="NagB/RpiA/CoA transferase-like"/>
    <property type="match status" value="1"/>
</dbReference>
<dbReference type="PROSITE" id="PS01274">
    <property type="entry name" value="COA_TRANSF_2"/>
    <property type="match status" value="1"/>
</dbReference>
<feature type="chain" id="PRO_0000157921" description="Succinyl-CoA:3-ketoacid coenzyme A transferase subunit B">
    <location>
        <begin position="1"/>
        <end position="207"/>
    </location>
</feature>
<feature type="active site" evidence="1">
    <location>
        <position position="43"/>
    </location>
</feature>
<feature type="sequence conflict" description="In Ref. 2; CAA03917." evidence="2" ref="2">
    <original>I</original>
    <variation>V</variation>
    <location>
        <position position="70"/>
    </location>
</feature>
<feature type="sequence conflict" description="In Ref. 2; CAA03917." evidence="2" ref="2">
    <original>K</original>
    <variation>R</variation>
    <location>
        <position position="196"/>
    </location>
</feature>
<feature type="sequence conflict" description="In Ref. 2; CAA03917." evidence="2" ref="2">
    <original>R</original>
    <variation>H</variation>
    <location>
        <position position="206"/>
    </location>
</feature>
<feature type="helix" evidence="3">
    <location>
        <begin position="2"/>
        <end position="10"/>
    </location>
</feature>
<feature type="strand" evidence="3">
    <location>
        <begin position="18"/>
        <end position="21"/>
    </location>
</feature>
<feature type="helix" evidence="3">
    <location>
        <begin position="25"/>
        <end position="33"/>
    </location>
</feature>
<feature type="strand" evidence="3">
    <location>
        <begin position="34"/>
        <end position="36"/>
    </location>
</feature>
<feature type="strand" evidence="3">
    <location>
        <begin position="39"/>
        <end position="42"/>
    </location>
</feature>
<feature type="turn" evidence="3">
    <location>
        <begin position="43"/>
        <end position="45"/>
    </location>
</feature>
<feature type="strand" evidence="3">
    <location>
        <begin position="46"/>
        <end position="49"/>
    </location>
</feature>
<feature type="strand" evidence="3">
    <location>
        <begin position="67"/>
        <end position="69"/>
    </location>
</feature>
<feature type="strand" evidence="3">
    <location>
        <begin position="72"/>
        <end position="78"/>
    </location>
</feature>
<feature type="helix" evidence="3">
    <location>
        <begin position="81"/>
        <end position="89"/>
    </location>
</feature>
<feature type="strand" evidence="3">
    <location>
        <begin position="94"/>
        <end position="98"/>
    </location>
</feature>
<feature type="strand" evidence="3">
    <location>
        <begin position="101"/>
        <end position="104"/>
    </location>
</feature>
<feature type="strand" evidence="3">
    <location>
        <begin position="112"/>
        <end position="114"/>
    </location>
</feature>
<feature type="turn" evidence="3">
    <location>
        <begin position="115"/>
        <end position="117"/>
    </location>
</feature>
<feature type="helix" evidence="3">
    <location>
        <begin position="125"/>
        <end position="131"/>
    </location>
</feature>
<feature type="strand" evidence="3">
    <location>
        <begin position="132"/>
        <end position="138"/>
    </location>
</feature>
<feature type="strand" evidence="3">
    <location>
        <begin position="148"/>
        <end position="153"/>
    </location>
</feature>
<feature type="strand" evidence="3">
    <location>
        <begin position="159"/>
        <end position="162"/>
    </location>
</feature>
<feature type="strand" evidence="3">
    <location>
        <begin position="165"/>
        <end position="168"/>
    </location>
</feature>
<feature type="strand" evidence="3">
    <location>
        <begin position="170"/>
        <end position="177"/>
    </location>
</feature>
<feature type="strand" evidence="3">
    <location>
        <begin position="180"/>
        <end position="186"/>
    </location>
</feature>
<feature type="helix" evidence="3">
    <location>
        <begin position="192"/>
        <end position="198"/>
    </location>
</feature>
<keyword id="KW-0002">3D-structure</keyword>
<keyword id="KW-1185">Reference proteome</keyword>
<keyword id="KW-0808">Transferase</keyword>
<organism>
    <name type="scientific">Helicobacter pylori (strain ATCC 700392 / 26695)</name>
    <name type="common">Campylobacter pylori</name>
    <dbReference type="NCBI Taxonomy" id="85962"/>
    <lineage>
        <taxon>Bacteria</taxon>
        <taxon>Pseudomonadati</taxon>
        <taxon>Campylobacterota</taxon>
        <taxon>Epsilonproteobacteria</taxon>
        <taxon>Campylobacterales</taxon>
        <taxon>Helicobacteraceae</taxon>
        <taxon>Helicobacter</taxon>
    </lineage>
</organism>
<comment type="catalytic activity">
    <reaction evidence="1">
        <text>a 3-oxo acid + succinyl-CoA = a 3-oxoacyl-CoA + succinate</text>
        <dbReference type="Rhea" id="RHEA:24564"/>
        <dbReference type="ChEBI" id="CHEBI:30031"/>
        <dbReference type="ChEBI" id="CHEBI:35973"/>
        <dbReference type="ChEBI" id="CHEBI:57292"/>
        <dbReference type="ChEBI" id="CHEBI:90726"/>
        <dbReference type="EC" id="2.8.3.5"/>
    </reaction>
</comment>
<comment type="subunit">
    <text>Heterodimer of a subunit A and a subunit B.</text>
</comment>
<comment type="interaction">
    <interactant intactId="EBI-7724043">
        <id>P56007</id>
    </interactant>
    <interactant intactId="EBI-7723842">
        <id>P56006</id>
        <label>scoA</label>
    </interactant>
    <organismsDiffer>false</organismsDiffer>
    <experiments>3</experiments>
</comment>
<comment type="similarity">
    <text evidence="2">Belongs to the 3-oxoacid CoA-transferase subunit B family.</text>
</comment>
<sequence>MREAIIKRAAKELKEGMYVNLGIGLPTLVANEVSGMNIVFQSENGLLGIGAYPLEGSVDADLINAGKETITVVPGASFFNSADSFAMIRGGHIDLAILGGMEVSQNGDLANWMIPKKLIKGMGGAMDLVHGAKKVIVIMEHCNKYGESKVKKECSLPLTGKGVVHQLITDLAVFEFSNNAMKLVELQEGVSLDQVKEKTEAEFEVRL</sequence>
<gene>
    <name type="primary">scoB</name>
    <name type="ordered locus">HP_0692</name>
</gene>
<evidence type="ECO:0000255" key="1">
    <source>
        <dbReference type="PROSITE-ProRule" id="PRU10034"/>
    </source>
</evidence>
<evidence type="ECO:0000305" key="2"/>
<evidence type="ECO:0007829" key="3">
    <source>
        <dbReference type="PDB" id="3RRL"/>
    </source>
</evidence>
<protein>
    <recommendedName>
        <fullName>Succinyl-CoA:3-ketoacid coenzyme A transferase subunit B</fullName>
        <ecNumber>2.8.3.5</ecNumber>
    </recommendedName>
    <alternativeName>
        <fullName>OXCT B</fullName>
    </alternativeName>
    <alternativeName>
        <fullName>Succinyl-CoA:3-oxoacid CoA-transferase</fullName>
    </alternativeName>
</protein>